<dbReference type="EC" id="3.4.14.10"/>
<dbReference type="EMBL" id="ABSU01000001">
    <property type="protein sequence ID" value="EFE37148.1"/>
    <property type="status" value="ALT_FRAME"/>
    <property type="molecule type" value="Genomic_DNA"/>
</dbReference>
<dbReference type="EMBL" id="ABSU01000001">
    <property type="protein sequence ID" value="EFE37149.1"/>
    <property type="status" value="ALT_SEQ"/>
    <property type="molecule type" value="Genomic_DNA"/>
</dbReference>
<dbReference type="RefSeq" id="XP_003017793.1">
    <property type="nucleotide sequence ID" value="XM_003017747.1"/>
</dbReference>
<dbReference type="RefSeq" id="XP_003017794.1">
    <property type="nucleotide sequence ID" value="XM_003017748.1"/>
</dbReference>
<dbReference type="SMR" id="D4AK75"/>
<dbReference type="STRING" id="663331.D4AK75"/>
<dbReference type="GlyCosmos" id="D4AK75">
    <property type="glycosylation" value="6 sites, No reported glycans"/>
</dbReference>
<dbReference type="KEGG" id="abe:ARB_04677"/>
<dbReference type="KEGG" id="abe:ARB_04678"/>
<dbReference type="eggNOG" id="ENOG502QR6D">
    <property type="taxonomic scope" value="Eukaryota"/>
</dbReference>
<dbReference type="HOGENOM" id="CLU_1730971_0_0_1"/>
<dbReference type="OrthoDB" id="409122at2759"/>
<dbReference type="Proteomes" id="UP000008866">
    <property type="component" value="Unassembled WGS sequence"/>
</dbReference>
<dbReference type="GO" id="GO:0005576">
    <property type="term" value="C:extracellular region"/>
    <property type="evidence" value="ECO:0007669"/>
    <property type="project" value="UniProtKB-SubCell"/>
</dbReference>
<dbReference type="GO" id="GO:0046872">
    <property type="term" value="F:metal ion binding"/>
    <property type="evidence" value="ECO:0007669"/>
    <property type="project" value="UniProtKB-KW"/>
</dbReference>
<dbReference type="GO" id="GO:0004252">
    <property type="term" value="F:serine-type endopeptidase activity"/>
    <property type="evidence" value="ECO:0007669"/>
    <property type="project" value="InterPro"/>
</dbReference>
<dbReference type="GO" id="GO:0008240">
    <property type="term" value="F:tripeptidyl-peptidase activity"/>
    <property type="evidence" value="ECO:0007669"/>
    <property type="project" value="UniProtKB-EC"/>
</dbReference>
<dbReference type="GO" id="GO:0006508">
    <property type="term" value="P:proteolysis"/>
    <property type="evidence" value="ECO:0007669"/>
    <property type="project" value="UniProtKB-KW"/>
</dbReference>
<dbReference type="CDD" id="cd04056">
    <property type="entry name" value="Peptidases_S53"/>
    <property type="match status" value="1"/>
</dbReference>
<dbReference type="CDD" id="cd11377">
    <property type="entry name" value="Pro-peptidase_S53"/>
    <property type="match status" value="1"/>
</dbReference>
<dbReference type="FunFam" id="3.40.50.200:FF:000015">
    <property type="entry name" value="Tripeptidyl peptidase A"/>
    <property type="match status" value="1"/>
</dbReference>
<dbReference type="Gene3D" id="3.40.50.200">
    <property type="entry name" value="Peptidase S8/S53 domain"/>
    <property type="match status" value="1"/>
</dbReference>
<dbReference type="InterPro" id="IPR000209">
    <property type="entry name" value="Peptidase_S8/S53_dom"/>
</dbReference>
<dbReference type="InterPro" id="IPR036852">
    <property type="entry name" value="Peptidase_S8/S53_dom_sf"/>
</dbReference>
<dbReference type="InterPro" id="IPR015366">
    <property type="entry name" value="S53_propep"/>
</dbReference>
<dbReference type="InterPro" id="IPR030400">
    <property type="entry name" value="Sedolisin_dom"/>
</dbReference>
<dbReference type="InterPro" id="IPR050819">
    <property type="entry name" value="Tripeptidyl-peptidase_I"/>
</dbReference>
<dbReference type="PANTHER" id="PTHR14218">
    <property type="entry name" value="PROTEASE S8 TRIPEPTIDYL PEPTIDASE I CLN2"/>
    <property type="match status" value="1"/>
</dbReference>
<dbReference type="PANTHER" id="PTHR14218:SF32">
    <property type="entry name" value="TRIPEPTIDYL PEPTIDASE SED3 (AFU_ORTHOLOGUE AFUA_3G08930)"/>
    <property type="match status" value="1"/>
</dbReference>
<dbReference type="Pfam" id="PF00082">
    <property type="entry name" value="Peptidase_S8"/>
    <property type="match status" value="1"/>
</dbReference>
<dbReference type="Pfam" id="PF09286">
    <property type="entry name" value="Pro-kuma_activ"/>
    <property type="match status" value="1"/>
</dbReference>
<dbReference type="SMART" id="SM00944">
    <property type="entry name" value="Pro-kuma_activ"/>
    <property type="match status" value="1"/>
</dbReference>
<dbReference type="SUPFAM" id="SSF54897">
    <property type="entry name" value="Protease propeptides/inhibitors"/>
    <property type="match status" value="1"/>
</dbReference>
<dbReference type="SUPFAM" id="SSF52743">
    <property type="entry name" value="Subtilisin-like"/>
    <property type="match status" value="1"/>
</dbReference>
<dbReference type="PROSITE" id="PS51695">
    <property type="entry name" value="SEDOLISIN"/>
    <property type="match status" value="1"/>
</dbReference>
<sequence length="593" mass="65507">MLLRWHSVIPLFLAMTVAFPNTYRTVVEDLPAIPEGWVQGNPPSPETSVRMNLAVGQQNTRTFEQIVLDISTPGHRNYGKHLSRRDLKGLLRPRRETSNLILSWLEKSGVPKRSIVDDGDWIHFVISISQAERMLQTRFYHFHDVQDPGISMIRTLKYSVPSRLARHVYMIQPTTKFGKPKKHANSIANLQAIYLSTNATENCNATITPRCLRELYKMGDYVAKPDCRNVIGVSGYLDQYARYSDFYKFLELYAPEMKGANFSVAHIGNGQNLQNSTRNSIEASLDIEYALGLSNASAVFYTTSGRGPLVPDLDQPEQEHNSNEPYLDQLHYLLSLPQEALPAVLSTSYGENEQSVPERFSHATCNLFAQLGARGVSVIFSSGDSGVGSSCLTNDKKKITRFNPTFPASCPFVTSVGATFKINPERATGFSSGGFSDRHSRPGYQNDAVQHYLDKLGDRWKGLYNPKGRGIPDVSAQGANFAIYDHGKVIIVSGTSASAPAFAAIIANLNAIRLRANKPVLGYLNPFIYGKGREGFTDIVHGGSKGCVGYSSTNRSTPAVPYASWNATEGWDPVTGVGTPNFRILAKIVQHME</sequence>
<protein>
    <recommendedName>
        <fullName>Probable tripeptidyl-peptidase SED3</fullName>
        <ecNumber>3.4.14.10</ecNumber>
    </recommendedName>
    <alternativeName>
        <fullName>Sedolisin-C</fullName>
    </alternativeName>
</protein>
<keyword id="KW-0106">Calcium</keyword>
<keyword id="KW-0325">Glycoprotein</keyword>
<keyword id="KW-0378">Hydrolase</keyword>
<keyword id="KW-0479">Metal-binding</keyword>
<keyword id="KW-0645">Protease</keyword>
<keyword id="KW-1185">Reference proteome</keyword>
<keyword id="KW-0964">Secreted</keyword>
<keyword id="KW-0720">Serine protease</keyword>
<keyword id="KW-0732">Signal</keyword>
<keyword id="KW-0843">Virulence</keyword>
<keyword id="KW-0865">Zymogen</keyword>
<gene>
    <name type="primary">SED3</name>
    <name type="ORF">ARB_04677/ARB_04678</name>
</gene>
<comment type="function">
    <text evidence="1">Secreted tripeptidyl-peptidase which degrades proteins at acidic pHs and is involved in virulence.</text>
</comment>
<comment type="catalytic activity">
    <reaction>
        <text>Release of an N-terminal tripeptide from a polypeptide.</text>
        <dbReference type="EC" id="3.4.14.10"/>
    </reaction>
</comment>
<comment type="cofactor">
    <cofactor evidence="1">
        <name>Ca(2+)</name>
        <dbReference type="ChEBI" id="CHEBI:29108"/>
    </cofactor>
    <text evidence="1">Binds 1 Ca(2+) ion per subunit.</text>
</comment>
<comment type="subcellular location">
    <subcellularLocation>
        <location evidence="1">Secreted</location>
        <location evidence="1">Extracellular space</location>
    </subcellularLocation>
</comment>
<comment type="sequence caution" evidence="3">
    <conflict type="frameshift">
        <sequence resource="EMBL-CDS" id="EFE37148"/>
    </conflict>
    <text>The predicted genes ARB_04677 and ARB_04678 have been merged.</text>
</comment>
<comment type="sequence caution" evidence="3">
    <conflict type="erroneous gene model prediction">
        <sequence resource="EMBL-CDS" id="EFE37149"/>
    </conflict>
</comment>
<comment type="sequence caution" evidence="3">
    <conflict type="frameshift">
        <sequence resource="EMBL-CDS" id="EFE37149"/>
    </conflict>
    <text>The predicted genes ARB_04677 and ARB_04678 have been merged.</text>
</comment>
<accession>D4AK75</accession>
<accession>D4AK76</accession>
<reference key="1">
    <citation type="journal article" date="2011" name="Genome Biol.">
        <title>Comparative and functional genomics provide insights into the pathogenicity of dermatophytic fungi.</title>
        <authorList>
            <person name="Burmester A."/>
            <person name="Shelest E."/>
            <person name="Gloeckner G."/>
            <person name="Heddergott C."/>
            <person name="Schindler S."/>
            <person name="Staib P."/>
            <person name="Heidel A."/>
            <person name="Felder M."/>
            <person name="Petzold A."/>
            <person name="Szafranski K."/>
            <person name="Feuermann M."/>
            <person name="Pedruzzi I."/>
            <person name="Priebe S."/>
            <person name="Groth M."/>
            <person name="Winkler R."/>
            <person name="Li W."/>
            <person name="Kniemeyer O."/>
            <person name="Schroeckh V."/>
            <person name="Hertweck C."/>
            <person name="Hube B."/>
            <person name="White T.C."/>
            <person name="Platzer M."/>
            <person name="Guthke R."/>
            <person name="Heitman J."/>
            <person name="Woestemeyer J."/>
            <person name="Zipfel P.F."/>
            <person name="Monod M."/>
            <person name="Brakhage A.A."/>
        </authorList>
    </citation>
    <scope>NUCLEOTIDE SEQUENCE [LARGE SCALE GENOMIC DNA]</scope>
    <source>
        <strain>ATCC MYA-4681 / CBS 112371</strain>
    </source>
</reference>
<name>SED3_ARTBC</name>
<feature type="signal peptide" evidence="2">
    <location>
        <begin position="1"/>
        <end position="18"/>
    </location>
</feature>
<feature type="propeptide" id="PRO_0000406412" description="Removed in mature form" evidence="1">
    <location>
        <begin position="19"/>
        <end position="198"/>
    </location>
</feature>
<feature type="chain" id="PRO_0000406413" description="Probable tripeptidyl-peptidase SED3">
    <location>
        <begin position="199"/>
        <end position="593"/>
    </location>
</feature>
<feature type="domain" description="Peptidase S53">
    <location>
        <begin position="206"/>
        <end position="592"/>
    </location>
</feature>
<feature type="active site" description="Charge relay system" evidence="1">
    <location>
        <position position="282"/>
    </location>
</feature>
<feature type="active site" description="Charge relay system" evidence="1">
    <location>
        <position position="286"/>
    </location>
</feature>
<feature type="active site" description="Charge relay system" evidence="1">
    <location>
        <position position="496"/>
    </location>
</feature>
<feature type="binding site" evidence="1">
    <location>
        <position position="538"/>
    </location>
    <ligand>
        <name>Ca(2+)</name>
        <dbReference type="ChEBI" id="CHEBI:29108"/>
    </ligand>
</feature>
<feature type="binding site" evidence="1">
    <location>
        <position position="539"/>
    </location>
    <ligand>
        <name>Ca(2+)</name>
        <dbReference type="ChEBI" id="CHEBI:29108"/>
    </ligand>
</feature>
<feature type="binding site" evidence="1">
    <location>
        <position position="570"/>
    </location>
    <ligand>
        <name>Ca(2+)</name>
        <dbReference type="ChEBI" id="CHEBI:29108"/>
    </ligand>
</feature>
<feature type="binding site" evidence="1">
    <location>
        <position position="572"/>
    </location>
    <ligand>
        <name>Ca(2+)</name>
        <dbReference type="ChEBI" id="CHEBI:29108"/>
    </ligand>
</feature>
<feature type="glycosylation site" description="N-linked (GlcNAc...) asparagine" evidence="2">
    <location>
        <position position="204"/>
    </location>
</feature>
<feature type="glycosylation site" description="N-linked (GlcNAc...) asparagine" evidence="2">
    <location>
        <position position="261"/>
    </location>
</feature>
<feature type="glycosylation site" description="N-linked (GlcNAc...) asparagine" evidence="2">
    <location>
        <position position="275"/>
    </location>
</feature>
<feature type="glycosylation site" description="N-linked (GlcNAc...) asparagine" evidence="2">
    <location>
        <position position="295"/>
    </location>
</feature>
<feature type="glycosylation site" description="N-linked (GlcNAc...) asparagine" evidence="2">
    <location>
        <position position="554"/>
    </location>
</feature>
<feature type="glycosylation site" description="N-linked (GlcNAc...) asparagine" evidence="2">
    <location>
        <position position="566"/>
    </location>
</feature>
<evidence type="ECO:0000250" key="1"/>
<evidence type="ECO:0000255" key="2"/>
<evidence type="ECO:0000305" key="3"/>
<proteinExistence type="inferred from homology"/>
<organism>
    <name type="scientific">Arthroderma benhamiae (strain ATCC MYA-4681 / CBS 112371)</name>
    <name type="common">Trichophyton mentagrophytes</name>
    <dbReference type="NCBI Taxonomy" id="663331"/>
    <lineage>
        <taxon>Eukaryota</taxon>
        <taxon>Fungi</taxon>
        <taxon>Dikarya</taxon>
        <taxon>Ascomycota</taxon>
        <taxon>Pezizomycotina</taxon>
        <taxon>Eurotiomycetes</taxon>
        <taxon>Eurotiomycetidae</taxon>
        <taxon>Onygenales</taxon>
        <taxon>Arthrodermataceae</taxon>
        <taxon>Trichophyton</taxon>
    </lineage>
</organism>